<feature type="chain" id="PRO_1000077499" description="Cardiolipin synthase">
    <location>
        <begin position="1"/>
        <end position="482"/>
    </location>
</feature>
<feature type="transmembrane region" description="Helical" evidence="1">
    <location>
        <begin position="4"/>
        <end position="24"/>
    </location>
</feature>
<feature type="transmembrane region" description="Helical" evidence="1">
    <location>
        <begin position="34"/>
        <end position="54"/>
    </location>
</feature>
<feature type="domain" description="PLD phosphodiesterase 1" evidence="1">
    <location>
        <begin position="217"/>
        <end position="244"/>
    </location>
</feature>
<feature type="domain" description="PLD phosphodiesterase 2" evidence="1">
    <location>
        <begin position="395"/>
        <end position="422"/>
    </location>
</feature>
<feature type="active site" evidence="1">
    <location>
        <position position="222"/>
    </location>
</feature>
<feature type="active site" evidence="1">
    <location>
        <position position="224"/>
    </location>
</feature>
<feature type="active site" evidence="1">
    <location>
        <position position="229"/>
    </location>
</feature>
<feature type="active site" evidence="1">
    <location>
        <position position="400"/>
    </location>
</feature>
<feature type="active site" evidence="1">
    <location>
        <position position="402"/>
    </location>
</feature>
<feature type="active site" evidence="1">
    <location>
        <position position="407"/>
    </location>
</feature>
<accession>A0ALI7</accession>
<comment type="function">
    <text evidence="1">Catalyzes the reversible phosphatidyl group transfer from one phosphatidylglycerol molecule to another to form cardiolipin (CL) (diphosphatidylglycerol) and glycerol.</text>
</comment>
<comment type="catalytic activity">
    <reaction evidence="1">
        <text>2 a 1,2-diacyl-sn-glycero-3-phospho-(1'-sn-glycerol) = a cardiolipin + glycerol</text>
        <dbReference type="Rhea" id="RHEA:31451"/>
        <dbReference type="ChEBI" id="CHEBI:17754"/>
        <dbReference type="ChEBI" id="CHEBI:62237"/>
        <dbReference type="ChEBI" id="CHEBI:64716"/>
    </reaction>
</comment>
<comment type="subcellular location">
    <subcellularLocation>
        <location evidence="1">Cell membrane</location>
        <topology evidence="1">Multi-pass membrane protein</topology>
    </subcellularLocation>
</comment>
<comment type="similarity">
    <text evidence="1">Belongs to the phospholipase D family. Cardiolipin synthase subfamily.</text>
</comment>
<gene>
    <name type="primary">cls</name>
    <name type="ordered locus">lwe2451</name>
</gene>
<keyword id="KW-1003">Cell membrane</keyword>
<keyword id="KW-0444">Lipid biosynthesis</keyword>
<keyword id="KW-0443">Lipid metabolism</keyword>
<keyword id="KW-0472">Membrane</keyword>
<keyword id="KW-0594">Phospholipid biosynthesis</keyword>
<keyword id="KW-1208">Phospholipid metabolism</keyword>
<keyword id="KW-0677">Repeat</keyword>
<keyword id="KW-0808">Transferase</keyword>
<keyword id="KW-0812">Transmembrane</keyword>
<keyword id="KW-1133">Transmembrane helix</keyword>
<evidence type="ECO:0000255" key="1">
    <source>
        <dbReference type="HAMAP-Rule" id="MF_01916"/>
    </source>
</evidence>
<reference key="1">
    <citation type="journal article" date="2006" name="J. Bacteriol.">
        <title>Whole-genome sequence of Listeria welshimeri reveals common steps in genome reduction with Listeria innocua as compared to Listeria monocytogenes.</title>
        <authorList>
            <person name="Hain T."/>
            <person name="Steinweg C."/>
            <person name="Kuenne C.T."/>
            <person name="Billion A."/>
            <person name="Ghai R."/>
            <person name="Chatterjee S.S."/>
            <person name="Domann E."/>
            <person name="Kaerst U."/>
            <person name="Goesmann A."/>
            <person name="Bekel T."/>
            <person name="Bartels D."/>
            <person name="Kaiser O."/>
            <person name="Meyer F."/>
            <person name="Puehler A."/>
            <person name="Weisshaar B."/>
            <person name="Wehland J."/>
            <person name="Liang C."/>
            <person name="Dandekar T."/>
            <person name="Lampidis R."/>
            <person name="Kreft J."/>
            <person name="Goebel W."/>
            <person name="Chakraborty T."/>
        </authorList>
    </citation>
    <scope>NUCLEOTIDE SEQUENCE [LARGE SCALE GENOMIC DNA]</scope>
    <source>
        <strain>ATCC 35897 / DSM 20650 / CCUG 15529 / CIP 8149 / NCTC 11857 / SLCC 5334 / V8</strain>
    </source>
</reference>
<sequence>MGLLAYLLVVLLILNVFFAAVTVFLERRDTSATWAWLLVLTFVPIFGFIIYLIFGRKLSGKKIFDWKGQEKIGIQESTANQIEMIRQKEFPFSDSNVKKHRDLIYLLLVNDGAILTQDNEVELFIDGHEKFDALIADIEKAKDHIHLIYYIFHSDELGNRLMRVLERKAAEGLNVKIIYDAMGSRTTKKSFFRTFEKNGGLVRPFFPSKLPLINFRLNYRNHRKLAIIDGDISYIGGFNIGDEYLGLSKKFGYWRDTHLRVHGKAVYAMQTRFIMDWNSASSTNKIDYKPRYFPTFHGKGHTSMQIVSSGPDSEWQQIKNGYIKMINAAKKTIYLQSPYFIPDASLLEAIKIAALSGVDVRVMIPNKPDHAFVYRATTNYAGELMETGAKIFIYDNGFIHAKTLVVDGEIASVGTANMDFRSFRLNFEVNAFIYEKKMVQKLEDAFLEDILKSYQLTPELYAKRSLWIKFKEAVSRLLSPIL</sequence>
<organism>
    <name type="scientific">Listeria welshimeri serovar 6b (strain ATCC 35897 / DSM 20650 / CCUG 15529 / CIP 8149 / NCTC 11857 / SLCC 5334 / V8)</name>
    <dbReference type="NCBI Taxonomy" id="386043"/>
    <lineage>
        <taxon>Bacteria</taxon>
        <taxon>Bacillati</taxon>
        <taxon>Bacillota</taxon>
        <taxon>Bacilli</taxon>
        <taxon>Bacillales</taxon>
        <taxon>Listeriaceae</taxon>
        <taxon>Listeria</taxon>
    </lineage>
</organism>
<proteinExistence type="inferred from homology"/>
<name>CLS_LISW6</name>
<dbReference type="EC" id="2.7.8.-" evidence="1"/>
<dbReference type="EMBL" id="AM263198">
    <property type="protein sequence ID" value="CAK21869.1"/>
    <property type="molecule type" value="Genomic_DNA"/>
</dbReference>
<dbReference type="RefSeq" id="WP_011703185.1">
    <property type="nucleotide sequence ID" value="NC_008555.1"/>
</dbReference>
<dbReference type="SMR" id="A0ALI7"/>
<dbReference type="STRING" id="386043.lwe2451"/>
<dbReference type="GeneID" id="61190370"/>
<dbReference type="KEGG" id="lwe:lwe2451"/>
<dbReference type="eggNOG" id="COG1502">
    <property type="taxonomic scope" value="Bacteria"/>
</dbReference>
<dbReference type="HOGENOM" id="CLU_038053_1_1_9"/>
<dbReference type="OrthoDB" id="9762009at2"/>
<dbReference type="Proteomes" id="UP000000779">
    <property type="component" value="Chromosome"/>
</dbReference>
<dbReference type="GO" id="GO:0005886">
    <property type="term" value="C:plasma membrane"/>
    <property type="evidence" value="ECO:0007669"/>
    <property type="project" value="UniProtKB-SubCell"/>
</dbReference>
<dbReference type="GO" id="GO:0008808">
    <property type="term" value="F:cardiolipin synthase activity"/>
    <property type="evidence" value="ECO:0007669"/>
    <property type="project" value="InterPro"/>
</dbReference>
<dbReference type="GO" id="GO:0032049">
    <property type="term" value="P:cardiolipin biosynthetic process"/>
    <property type="evidence" value="ECO:0007669"/>
    <property type="project" value="InterPro"/>
</dbReference>
<dbReference type="CDD" id="cd09110">
    <property type="entry name" value="PLDc_CLS_1"/>
    <property type="match status" value="1"/>
</dbReference>
<dbReference type="CDD" id="cd09112">
    <property type="entry name" value="PLDc_CLS_2"/>
    <property type="match status" value="1"/>
</dbReference>
<dbReference type="FunFam" id="3.30.870.10:FF:000014">
    <property type="entry name" value="Cardiolipin synthase"/>
    <property type="match status" value="1"/>
</dbReference>
<dbReference type="FunFam" id="3.30.870.10:FF:000021">
    <property type="entry name" value="Cardiolipin synthase"/>
    <property type="match status" value="1"/>
</dbReference>
<dbReference type="Gene3D" id="3.30.870.10">
    <property type="entry name" value="Endonuclease Chain A"/>
    <property type="match status" value="2"/>
</dbReference>
<dbReference type="HAMAP" id="MF_01916">
    <property type="entry name" value="Cardiolipin_synth_Cls"/>
    <property type="match status" value="1"/>
</dbReference>
<dbReference type="InterPro" id="IPR030874">
    <property type="entry name" value="Cardiolipin_synth_Firmi"/>
</dbReference>
<dbReference type="InterPro" id="IPR022924">
    <property type="entry name" value="Cardiolipin_synthase"/>
</dbReference>
<dbReference type="InterPro" id="IPR027379">
    <property type="entry name" value="CLS_N"/>
</dbReference>
<dbReference type="InterPro" id="IPR025202">
    <property type="entry name" value="PLD-like_dom"/>
</dbReference>
<dbReference type="InterPro" id="IPR001736">
    <property type="entry name" value="PLipase_D/transphosphatidylase"/>
</dbReference>
<dbReference type="NCBIfam" id="TIGR04265">
    <property type="entry name" value="bac_cardiolipin"/>
    <property type="match status" value="1"/>
</dbReference>
<dbReference type="PANTHER" id="PTHR21248">
    <property type="entry name" value="CARDIOLIPIN SYNTHASE"/>
    <property type="match status" value="1"/>
</dbReference>
<dbReference type="PANTHER" id="PTHR21248:SF22">
    <property type="entry name" value="PHOSPHOLIPASE D"/>
    <property type="match status" value="1"/>
</dbReference>
<dbReference type="Pfam" id="PF13091">
    <property type="entry name" value="PLDc_2"/>
    <property type="match status" value="2"/>
</dbReference>
<dbReference type="Pfam" id="PF13396">
    <property type="entry name" value="PLDc_N"/>
    <property type="match status" value="1"/>
</dbReference>
<dbReference type="SMART" id="SM00155">
    <property type="entry name" value="PLDc"/>
    <property type="match status" value="2"/>
</dbReference>
<dbReference type="SUPFAM" id="SSF56024">
    <property type="entry name" value="Phospholipase D/nuclease"/>
    <property type="match status" value="2"/>
</dbReference>
<dbReference type="PROSITE" id="PS50035">
    <property type="entry name" value="PLD"/>
    <property type="match status" value="2"/>
</dbReference>
<protein>
    <recommendedName>
        <fullName evidence="1">Cardiolipin synthase</fullName>
        <shortName evidence="1">CL synthase</shortName>
        <ecNumber evidence="1">2.7.8.-</ecNumber>
    </recommendedName>
</protein>